<feature type="chain" id="PRO_0000437926" description="C6 finger domain transcription factor nscR">
    <location>
        <begin position="1"/>
        <end position="711"/>
    </location>
</feature>
<feature type="DNA-binding region" description="Zn(2)-C6 fungal-type" evidence="1">
    <location>
        <begin position="17"/>
        <end position="43"/>
    </location>
</feature>
<feature type="region of interest" description="Disordered" evidence="2">
    <location>
        <begin position="372"/>
        <end position="394"/>
    </location>
</feature>
<reference key="1">
    <citation type="journal article" date="2012" name="MBio">
        <title>Comparative genome analysis of Trichophyton rubrum and related dermatophytes reveals candidate genes involved in infection.</title>
        <authorList>
            <person name="Martinez D.A."/>
            <person name="Oliver B.G."/>
            <person name="Graeser Y."/>
            <person name="Goldberg J.M."/>
            <person name="Li W."/>
            <person name="Martinez-Rossi N.M."/>
            <person name="Monod M."/>
            <person name="Shelest E."/>
            <person name="Barton R.C."/>
            <person name="Birch E."/>
            <person name="Brakhage A.A."/>
            <person name="Chen Z."/>
            <person name="Gurr S.J."/>
            <person name="Heiman D."/>
            <person name="Heitman J."/>
            <person name="Kosti I."/>
            <person name="Rossi A."/>
            <person name="Saif S."/>
            <person name="Samalova M."/>
            <person name="Saunders C.W."/>
            <person name="Shea T."/>
            <person name="Summerbell R.C."/>
            <person name="Xu J."/>
            <person name="Young S."/>
            <person name="Zeng Q."/>
            <person name="Birren B.W."/>
            <person name="Cuomo C.A."/>
            <person name="White T.C."/>
        </authorList>
    </citation>
    <scope>NUCLEOTIDE SEQUENCE [LARGE SCALE GENOMIC DNA]</scope>
    <source>
        <strain>CBS 112818</strain>
    </source>
</reference>
<reference key="2">
    <citation type="journal article" date="2013" name="ACS Synth. Biol.">
        <title>Discovery of cryptic polyketide metabolites from dermatophytes using heterologous expression in Aspergillus nidulans.</title>
        <authorList>
            <person name="Yin W.B."/>
            <person name="Chooi Y.H."/>
            <person name="Smith A.R."/>
            <person name="Cacho R.A."/>
            <person name="Hu Y."/>
            <person name="White T.C."/>
            <person name="Tang Y."/>
        </authorList>
    </citation>
    <scope>FUNCTION</scope>
</reference>
<reference key="3">
    <citation type="journal article" date="2013" name="Org. Lett.">
        <title>Genome mining of a prenylated and immunosuppressive polyketide from pathogenic fungi.</title>
        <authorList>
            <person name="Chooi Y.H."/>
            <person name="Fang J."/>
            <person name="Liu H."/>
            <person name="Filler S.G."/>
            <person name="Wang P."/>
            <person name="Tang Y."/>
        </authorList>
    </citation>
    <scope>FUNCTION</scope>
</reference>
<comment type="function">
    <text evidence="3 5">Transcription factor that specifically regulates the neosartoricin B biosynthesis gene cluster (PubMed:23368997, PubMed:23758576).</text>
</comment>
<comment type="subcellular location">
    <subcellularLocation>
        <location evidence="1">Nucleus</location>
    </subcellularLocation>
</comment>
<protein>
    <recommendedName>
        <fullName evidence="4">C6 finger domain transcription factor nscR</fullName>
    </recommendedName>
    <alternativeName>
        <fullName evidence="4">Neosartiricin B biosynthesis protein R</fullName>
    </alternativeName>
</protein>
<organism>
    <name type="scientific">Trichophyton tonsurans (strain CBS 112818)</name>
    <name type="common">Scalp ringworm fungus</name>
    <dbReference type="NCBI Taxonomy" id="647933"/>
    <lineage>
        <taxon>Eukaryota</taxon>
        <taxon>Fungi</taxon>
        <taxon>Dikarya</taxon>
        <taxon>Ascomycota</taxon>
        <taxon>Pezizomycotina</taxon>
        <taxon>Eurotiomycetes</taxon>
        <taxon>Eurotiomycetidae</taxon>
        <taxon>Onygenales</taxon>
        <taxon>Arthrodermataceae</taxon>
        <taxon>Trichophyton</taxon>
    </lineage>
</organism>
<gene>
    <name evidence="4" type="primary">nscR</name>
    <name type="ORF">TESG_06706</name>
</gene>
<sequence>MEKRGPKRRQQAAHLSCELCRERKVKCDKLDPCTNCSSAGVICVPVRRPRLPRGAHAQRLRRNSPEDPEAPIQIDIASPADAGTIADDDLKKRIRRLEALVDSMRSSSHISKQDQEAEDTIESTLNRIDDDSLLIKTPRVHPSDGGLRILGLSGSSSPETGWASILEDREISMQLCQVYLLNVDPVIKILHRPSVEKWMLQGQRYLGFPERHSAVESLGAAICYVAATSLTETQSWARFHATKSSIVARARRACETTLEKSSPLLSPVITTLQAFLLYLHESFIEQNVLIPLKTHQVARRSEDPSRAVWTLMAFAVRIAKALDLPRGAGDNFFGQQMRKRLWLAICLLDFQTSLSQPSEPLITVAEATSSFSPPKHINDSDFDPTTSHDVPDREGLTDTTFSLVSYHVQAAGRLLNFEPSVKDDGSRQQNVQHFEQRTLRLLLYCDPESTPYAWFTWHRIQCFVSGARLSAIRPLMHQHGDHPISILDTNEGTSILSLALNILEKVQLVHTDPRGEAFRWFVTVPWQPLAIAMSECYICQDIALVQRAWPIVEAAFQQHEATVSGSSKAISITLERLMCRVREKLSPSLGTSTSLTASPIFCATNTANTLSVPHTPPSRSSITSSGDLLGNWSWTTATELLRPGEDLALVTEAPISTSPQKIDPLLFSLDSQLLIAGQEQLVEADQSWAAWDEVIASLHDDETGRANMFLS</sequence>
<proteinExistence type="inferred from homology"/>
<dbReference type="EMBL" id="GG698521">
    <property type="protein sequence ID" value="EGD99352.1"/>
    <property type="molecule type" value="Genomic_DNA"/>
</dbReference>
<dbReference type="HOGENOM" id="CLU_004083_7_1_1"/>
<dbReference type="OrthoDB" id="3754at34384"/>
<dbReference type="Proteomes" id="UP000009172">
    <property type="component" value="Unassembled WGS sequence"/>
</dbReference>
<dbReference type="GO" id="GO:0005634">
    <property type="term" value="C:nucleus"/>
    <property type="evidence" value="ECO:0007669"/>
    <property type="project" value="UniProtKB-SubCell"/>
</dbReference>
<dbReference type="GO" id="GO:0003677">
    <property type="term" value="F:DNA binding"/>
    <property type="evidence" value="ECO:0007669"/>
    <property type="project" value="UniProtKB-KW"/>
</dbReference>
<dbReference type="GO" id="GO:0000981">
    <property type="term" value="F:DNA-binding transcription factor activity, RNA polymerase II-specific"/>
    <property type="evidence" value="ECO:0007669"/>
    <property type="project" value="InterPro"/>
</dbReference>
<dbReference type="GO" id="GO:0008270">
    <property type="term" value="F:zinc ion binding"/>
    <property type="evidence" value="ECO:0007669"/>
    <property type="project" value="InterPro"/>
</dbReference>
<dbReference type="CDD" id="cd12148">
    <property type="entry name" value="fungal_TF_MHR"/>
    <property type="match status" value="1"/>
</dbReference>
<dbReference type="CDD" id="cd00067">
    <property type="entry name" value="GAL4"/>
    <property type="match status" value="1"/>
</dbReference>
<dbReference type="Gene3D" id="4.10.240.10">
    <property type="entry name" value="Zn(2)-C6 fungal-type DNA-binding domain"/>
    <property type="match status" value="1"/>
</dbReference>
<dbReference type="InterPro" id="IPR050613">
    <property type="entry name" value="Sec_Metabolite_Reg"/>
</dbReference>
<dbReference type="InterPro" id="IPR036864">
    <property type="entry name" value="Zn2-C6_fun-type_DNA-bd_sf"/>
</dbReference>
<dbReference type="InterPro" id="IPR001138">
    <property type="entry name" value="Zn2Cys6_DnaBD"/>
</dbReference>
<dbReference type="PANTHER" id="PTHR31001">
    <property type="entry name" value="UNCHARACTERIZED TRANSCRIPTIONAL REGULATORY PROTEIN"/>
    <property type="match status" value="1"/>
</dbReference>
<dbReference type="PANTHER" id="PTHR31001:SF50">
    <property type="entry name" value="ZN(II)2CYS6 TRANSCRIPTION FACTOR (EUROFUNG)"/>
    <property type="match status" value="1"/>
</dbReference>
<dbReference type="Pfam" id="PF00172">
    <property type="entry name" value="Zn_clus"/>
    <property type="match status" value="1"/>
</dbReference>
<dbReference type="SMART" id="SM00066">
    <property type="entry name" value="GAL4"/>
    <property type="match status" value="1"/>
</dbReference>
<dbReference type="SUPFAM" id="SSF57701">
    <property type="entry name" value="Zn2/Cys6 DNA-binding domain"/>
    <property type="match status" value="1"/>
</dbReference>
<dbReference type="PROSITE" id="PS00463">
    <property type="entry name" value="ZN2_CY6_FUNGAL_1"/>
    <property type="match status" value="1"/>
</dbReference>
<dbReference type="PROSITE" id="PS50048">
    <property type="entry name" value="ZN2_CY6_FUNGAL_2"/>
    <property type="match status" value="1"/>
</dbReference>
<accession>F2S703</accession>
<evidence type="ECO:0000255" key="1">
    <source>
        <dbReference type="PROSITE-ProRule" id="PRU00227"/>
    </source>
</evidence>
<evidence type="ECO:0000256" key="2">
    <source>
        <dbReference type="SAM" id="MobiDB-lite"/>
    </source>
</evidence>
<evidence type="ECO:0000269" key="3">
    <source>
    </source>
</evidence>
<evidence type="ECO:0000303" key="4">
    <source>
    </source>
</evidence>
<evidence type="ECO:0000305" key="5">
    <source>
    </source>
</evidence>
<keyword id="KW-0238">DNA-binding</keyword>
<keyword id="KW-0479">Metal-binding</keyword>
<keyword id="KW-0539">Nucleus</keyword>
<keyword id="KW-0804">Transcription</keyword>
<keyword id="KW-0805">Transcription regulation</keyword>
<name>NSCR_TRIT1</name>